<keyword id="KW-0963">Cytoplasm</keyword>
<keyword id="KW-0690">Ribosome biogenesis</keyword>
<comment type="function">
    <text evidence="1">Required for maturation of 30S ribosomal subunits.</text>
</comment>
<comment type="subcellular location">
    <subcellularLocation>
        <location evidence="1">Cytoplasm</location>
    </subcellularLocation>
</comment>
<comment type="similarity">
    <text evidence="1">Belongs to the RimP family.</text>
</comment>
<proteinExistence type="inferred from homology"/>
<organism>
    <name type="scientific">Burkholderia mallei (strain SAVP1)</name>
    <dbReference type="NCBI Taxonomy" id="320388"/>
    <lineage>
        <taxon>Bacteria</taxon>
        <taxon>Pseudomonadati</taxon>
        <taxon>Pseudomonadota</taxon>
        <taxon>Betaproteobacteria</taxon>
        <taxon>Burkholderiales</taxon>
        <taxon>Burkholderiaceae</taxon>
        <taxon>Burkholderia</taxon>
        <taxon>pseudomallei group</taxon>
    </lineage>
</organism>
<gene>
    <name evidence="1" type="primary">rimP</name>
    <name type="ordered locus">BMASAVP1_A1509</name>
</gene>
<name>RIMP_BURMS</name>
<accession>A1V3N6</accession>
<dbReference type="EMBL" id="CP000526">
    <property type="protein sequence ID" value="ABM52404.1"/>
    <property type="molecule type" value="Genomic_DNA"/>
</dbReference>
<dbReference type="RefSeq" id="WP_004193908.1">
    <property type="nucleotide sequence ID" value="NC_008785.1"/>
</dbReference>
<dbReference type="SMR" id="A1V3N6"/>
<dbReference type="GeneID" id="93060071"/>
<dbReference type="KEGG" id="bmv:BMASAVP1_A1509"/>
<dbReference type="HOGENOM" id="CLU_070525_1_0_4"/>
<dbReference type="GO" id="GO:0005829">
    <property type="term" value="C:cytosol"/>
    <property type="evidence" value="ECO:0007669"/>
    <property type="project" value="TreeGrafter"/>
</dbReference>
<dbReference type="GO" id="GO:0000028">
    <property type="term" value="P:ribosomal small subunit assembly"/>
    <property type="evidence" value="ECO:0007669"/>
    <property type="project" value="TreeGrafter"/>
</dbReference>
<dbReference type="GO" id="GO:0006412">
    <property type="term" value="P:translation"/>
    <property type="evidence" value="ECO:0007669"/>
    <property type="project" value="TreeGrafter"/>
</dbReference>
<dbReference type="CDD" id="cd01734">
    <property type="entry name" value="YlxS_C"/>
    <property type="match status" value="1"/>
</dbReference>
<dbReference type="Gene3D" id="2.30.30.180">
    <property type="entry name" value="Ribosome maturation factor RimP, C-terminal domain"/>
    <property type="match status" value="1"/>
</dbReference>
<dbReference type="Gene3D" id="3.30.300.70">
    <property type="entry name" value="RimP-like superfamily, N-terminal"/>
    <property type="match status" value="1"/>
</dbReference>
<dbReference type="HAMAP" id="MF_01077">
    <property type="entry name" value="RimP"/>
    <property type="match status" value="1"/>
</dbReference>
<dbReference type="InterPro" id="IPR003728">
    <property type="entry name" value="Ribosome_maturation_RimP"/>
</dbReference>
<dbReference type="InterPro" id="IPR028998">
    <property type="entry name" value="RimP_C"/>
</dbReference>
<dbReference type="InterPro" id="IPR036847">
    <property type="entry name" value="RimP_C_sf"/>
</dbReference>
<dbReference type="InterPro" id="IPR028989">
    <property type="entry name" value="RimP_N"/>
</dbReference>
<dbReference type="InterPro" id="IPR035956">
    <property type="entry name" value="RimP_N_sf"/>
</dbReference>
<dbReference type="NCBIfam" id="NF000929">
    <property type="entry name" value="PRK00092.2-1"/>
    <property type="match status" value="1"/>
</dbReference>
<dbReference type="PANTHER" id="PTHR33867">
    <property type="entry name" value="RIBOSOME MATURATION FACTOR RIMP"/>
    <property type="match status" value="1"/>
</dbReference>
<dbReference type="PANTHER" id="PTHR33867:SF1">
    <property type="entry name" value="RIBOSOME MATURATION FACTOR RIMP"/>
    <property type="match status" value="1"/>
</dbReference>
<dbReference type="Pfam" id="PF17384">
    <property type="entry name" value="DUF150_C"/>
    <property type="match status" value="1"/>
</dbReference>
<dbReference type="Pfam" id="PF02576">
    <property type="entry name" value="RimP_N"/>
    <property type="match status" value="1"/>
</dbReference>
<dbReference type="SUPFAM" id="SSF74942">
    <property type="entry name" value="YhbC-like, C-terminal domain"/>
    <property type="match status" value="1"/>
</dbReference>
<dbReference type="SUPFAM" id="SSF75420">
    <property type="entry name" value="YhbC-like, N-terminal domain"/>
    <property type="match status" value="1"/>
</dbReference>
<protein>
    <recommendedName>
        <fullName evidence="1">Ribosome maturation factor RimP</fullName>
    </recommendedName>
</protein>
<feature type="chain" id="PRO_1000064693" description="Ribosome maturation factor RimP">
    <location>
        <begin position="1"/>
        <end position="153"/>
    </location>
</feature>
<evidence type="ECO:0000255" key="1">
    <source>
        <dbReference type="HAMAP-Rule" id="MF_01077"/>
    </source>
</evidence>
<sequence>MQLTELIETTVTGLGYELVDLERTGRGMVCVYIDQPAGITIDDCEKVTRQLQHVLTVENIDYERLEVSSPGLDRPLKKLADFTRFAGSEAVITLKKPLDGRKTYRGILHAPNGETIGLEFERKKGEAAMLDFTLADIDKARLIPHVDFRSRKQ</sequence>
<reference key="1">
    <citation type="journal article" date="2010" name="Genome Biol. Evol.">
        <title>Continuing evolution of Burkholderia mallei through genome reduction and large-scale rearrangements.</title>
        <authorList>
            <person name="Losada L."/>
            <person name="Ronning C.M."/>
            <person name="DeShazer D."/>
            <person name="Woods D."/>
            <person name="Fedorova N."/>
            <person name="Kim H.S."/>
            <person name="Shabalina S.A."/>
            <person name="Pearson T.R."/>
            <person name="Brinkac L."/>
            <person name="Tan P."/>
            <person name="Nandi T."/>
            <person name="Crabtree J."/>
            <person name="Badger J."/>
            <person name="Beckstrom-Sternberg S."/>
            <person name="Saqib M."/>
            <person name="Schutzer S.E."/>
            <person name="Keim P."/>
            <person name="Nierman W.C."/>
        </authorList>
    </citation>
    <scope>NUCLEOTIDE SEQUENCE [LARGE SCALE GENOMIC DNA]</scope>
    <source>
        <strain>SAVP1</strain>
    </source>
</reference>